<accession>Q18DH5</accession>
<evidence type="ECO:0000250" key="1"/>
<evidence type="ECO:0000255" key="2"/>
<evidence type="ECO:0000269" key="3">
    <source>
    </source>
</evidence>
<evidence type="ECO:0000305" key="4"/>
<evidence type="ECO:0007829" key="5">
    <source>
        <dbReference type="PDB" id="8WEW"/>
    </source>
</evidence>
<feature type="chain" id="PRO_0000428848" description="Bacteriorhodopsin-II-like protein">
    <location>
        <begin position="1"/>
        <end position="246"/>
    </location>
</feature>
<feature type="transmembrane region" description="Helical" evidence="2">
    <location>
        <begin position="7"/>
        <end position="27"/>
    </location>
</feature>
<feature type="transmembrane region" description="Helical" evidence="2">
    <location>
        <begin position="45"/>
        <end position="65"/>
    </location>
</feature>
<feature type="transmembrane region" description="Helical" evidence="2">
    <location>
        <begin position="82"/>
        <end position="102"/>
    </location>
</feature>
<feature type="transmembrane region" description="Helical" evidence="2">
    <location>
        <begin position="107"/>
        <end position="127"/>
    </location>
</feature>
<feature type="transmembrane region" description="Helical" evidence="2">
    <location>
        <begin position="135"/>
        <end position="155"/>
    </location>
</feature>
<feature type="transmembrane region" description="Helical" evidence="2">
    <location>
        <begin position="182"/>
        <end position="202"/>
    </location>
</feature>
<feature type="transmembrane region" description="Helical" evidence="2">
    <location>
        <begin position="205"/>
        <end position="225"/>
    </location>
</feature>
<feature type="site" description="Primary proton acceptor" evidence="1">
    <location>
        <position position="84"/>
    </location>
</feature>
<feature type="modified residue" description="N6-(retinylidene)lysine" evidence="1">
    <location>
        <position position="217"/>
    </location>
</feature>
<feature type="mutagenesis site" description="Able to induce phototactic response in heterologous host; when associated with Y-211." evidence="3">
    <original>A</original>
    <variation>T</variation>
    <location>
        <position position="201"/>
    </location>
</feature>
<feature type="mutagenesis site" description="Able to induce phototactic response in heterologous host; when associated with T-201." evidence="3">
    <original>M</original>
    <variation>Y</variation>
    <location>
        <position position="211"/>
    </location>
</feature>
<feature type="helix" evidence="5">
    <location>
        <begin position="7"/>
        <end position="28"/>
    </location>
</feature>
<feature type="helix" evidence="5">
    <location>
        <begin position="35"/>
        <end position="59"/>
    </location>
</feature>
<feature type="strand" evidence="5">
    <location>
        <begin position="70"/>
        <end position="73"/>
    </location>
</feature>
<feature type="helix" evidence="5">
    <location>
        <begin position="79"/>
        <end position="100"/>
    </location>
</feature>
<feature type="helix" evidence="5">
    <location>
        <begin position="104"/>
        <end position="126"/>
    </location>
</feature>
<feature type="helix" evidence="5">
    <location>
        <begin position="131"/>
        <end position="153"/>
    </location>
</feature>
<feature type="helix" evidence="5">
    <location>
        <begin position="155"/>
        <end position="163"/>
    </location>
</feature>
<feature type="helix" evidence="5">
    <location>
        <begin position="165"/>
        <end position="182"/>
    </location>
</feature>
<feature type="helix" evidence="5">
    <location>
        <begin position="185"/>
        <end position="191"/>
    </location>
</feature>
<feature type="strand" evidence="5">
    <location>
        <begin position="192"/>
        <end position="196"/>
    </location>
</feature>
<feature type="helix" evidence="5">
    <location>
        <begin position="202"/>
        <end position="226"/>
    </location>
</feature>
<feature type="helix" evidence="5">
    <location>
        <begin position="228"/>
        <end position="231"/>
    </location>
</feature>
<reference key="1">
    <citation type="journal article" date="2006" name="BMC Genomics">
        <title>The genome of the square archaeon Haloquadratum walsbyi: life at the limits of water activity.</title>
        <authorList>
            <person name="Bolhuis H."/>
            <person name="Palm P."/>
            <person name="Wende A."/>
            <person name="Falb M."/>
            <person name="Rampp M."/>
            <person name="Rodriguez-Valera F."/>
            <person name="Pfeiffer F."/>
            <person name="Oesterhelt D."/>
        </authorList>
    </citation>
    <scope>NUCLEOTIDE SEQUENCE [LARGE SCALE GENOMIC DNA]</scope>
    <source>
        <strain>DSM 16790 / HBSQ001</strain>
    </source>
</reference>
<reference key="2">
    <citation type="journal article" date="2011" name="J. Biol. Chem.">
        <title>A microbial rhodopsin with a unique retinal composition shows both sensory rhodopsin II and bacteriorhodopsin-like properties.</title>
        <authorList>
            <person name="Sudo Y."/>
            <person name="Ihara K."/>
            <person name="Kobayashi S."/>
            <person name="Suzuki D."/>
            <person name="Irieda H."/>
            <person name="Kikukawa T."/>
            <person name="Kandori H."/>
            <person name="Homma M."/>
        </authorList>
    </citation>
    <scope>FUNCTION</scope>
    <scope>BIOPHYSICOCHEMICAL PROPERTIES</scope>
    <scope>MUTAGENESIS OF ALA-201 AND MET-211</scope>
</reference>
<name>BACRM_HALWD</name>
<comment type="function">
    <text evidence="3">Has no proton-pumping activity but is potentially capable of functioning as a sensory SRII-like protein. The chromophore contains 36.5% all-trans-, 7.6% 11-cis- and 56.4% 13-cis-retinal in the dark and 30.1% 11-cis- and 47.7% 13-cis-retinal upon illumination with &gt;460 nm light.</text>
</comment>
<comment type="biophysicochemical properties">
    <absorption>
        <max evidence="3">485 nm</max>
    </absorption>
</comment>
<comment type="subcellular location">
    <subcellularLocation>
        <location evidence="4">Cell membrane</location>
        <topology evidence="4">Multi-pass membrane protein</topology>
    </subcellularLocation>
</comment>
<comment type="PTM">
    <text evidence="1">The covalent binding of retinal to the apoprotein, bacterioopsin, generates bacteriorhodopsin.</text>
</comment>
<comment type="similarity">
    <text evidence="4">Belongs to the archaeal/bacterial/fungal opsin family.</text>
</comment>
<comment type="caution">
    <text evidence="4">Is called bop1 in PubMed:21135094.</text>
</comment>
<proteinExistence type="evidence at protein level"/>
<sequence length="246" mass="26658">MATPGSEATWLWIGTIGMVLGTVYFAVRGRGSTDPEQQTYYIITTLIPAIAAAAYLAMATGLGVISMPIRGTEVIDIYWARYADWLLTTPLLIIDLALVAGARKQTLYKLIIIDAIMILGGLAGSMMQQGAVIRIVWWAVSTAAFIILLYYLLGELSERARSRSAETGIVFNRLRNITLGLWALYPIVWILGTGGGFGIIAVTTEIMLYVMLDIGTKIGFGAVLLESQDVLQAASHPSSTNDIKSH</sequence>
<dbReference type="EMBL" id="AM180088">
    <property type="protein sequence ID" value="CAJ51147.1"/>
    <property type="molecule type" value="Genomic_DNA"/>
</dbReference>
<dbReference type="RefSeq" id="WP_011570314.1">
    <property type="nucleotide sequence ID" value="NC_008212.1"/>
</dbReference>
<dbReference type="PDB" id="8WEW">
    <property type="method" value="X-ray"/>
    <property type="resolution" value="2.50 A"/>
    <property type="chains" value="A/B=1-246"/>
</dbReference>
<dbReference type="PDB" id="8XHW">
    <property type="method" value="X-ray"/>
    <property type="resolution" value="2.94 A"/>
    <property type="chains" value="A/B/C/D=1-246"/>
</dbReference>
<dbReference type="PDBsum" id="8WEW"/>
<dbReference type="PDBsum" id="8XHW"/>
<dbReference type="SMR" id="Q18DH5"/>
<dbReference type="STRING" id="362976.HQ_1017A"/>
<dbReference type="TCDB" id="3.E.1.1.16">
    <property type="family name" value="the ion-translocating microbial rhodopsin (mr) family"/>
</dbReference>
<dbReference type="GeneID" id="4193773"/>
<dbReference type="KEGG" id="hwa:HQ_1017A"/>
<dbReference type="eggNOG" id="arCOG02812">
    <property type="taxonomic scope" value="Archaea"/>
</dbReference>
<dbReference type="HOGENOM" id="CLU_054785_5_1_2"/>
<dbReference type="Proteomes" id="UP000001975">
    <property type="component" value="Chromosome"/>
</dbReference>
<dbReference type="GO" id="GO:0005886">
    <property type="term" value="C:plasma membrane"/>
    <property type="evidence" value="ECO:0007669"/>
    <property type="project" value="UniProtKB-SubCell"/>
</dbReference>
<dbReference type="GO" id="GO:0005216">
    <property type="term" value="F:monoatomic ion channel activity"/>
    <property type="evidence" value="ECO:0007669"/>
    <property type="project" value="InterPro"/>
</dbReference>
<dbReference type="GO" id="GO:0009881">
    <property type="term" value="F:photoreceptor activity"/>
    <property type="evidence" value="ECO:0007669"/>
    <property type="project" value="UniProtKB-KW"/>
</dbReference>
<dbReference type="GO" id="GO:0007602">
    <property type="term" value="P:phototransduction"/>
    <property type="evidence" value="ECO:0007669"/>
    <property type="project" value="UniProtKB-KW"/>
</dbReference>
<dbReference type="CDD" id="cd15244">
    <property type="entry name" value="7tm_bacteriorhodopsin"/>
    <property type="match status" value="1"/>
</dbReference>
<dbReference type="Gene3D" id="1.20.1070.10">
    <property type="entry name" value="Rhodopsin 7-helix transmembrane proteins"/>
    <property type="match status" value="1"/>
</dbReference>
<dbReference type="InterPro" id="IPR001425">
    <property type="entry name" value="Arc/bac/fun_rhodopsins"/>
</dbReference>
<dbReference type="InterPro" id="IPR018229">
    <property type="entry name" value="Rhodopsin_retinal_BS"/>
</dbReference>
<dbReference type="PANTHER" id="PTHR28286">
    <property type="match status" value="1"/>
</dbReference>
<dbReference type="PANTHER" id="PTHR28286:SF2">
    <property type="entry name" value="BACTERIORHODOPSIN _OPSIN, NOPA (EUROFUNG)"/>
    <property type="match status" value="1"/>
</dbReference>
<dbReference type="Pfam" id="PF01036">
    <property type="entry name" value="Bac_rhodopsin"/>
    <property type="match status" value="1"/>
</dbReference>
<dbReference type="PRINTS" id="PR00251">
    <property type="entry name" value="BACTRLOPSIN"/>
</dbReference>
<dbReference type="SMART" id="SM01021">
    <property type="entry name" value="Bac_rhodopsin"/>
    <property type="match status" value="1"/>
</dbReference>
<dbReference type="SUPFAM" id="SSF81321">
    <property type="entry name" value="Family A G protein-coupled receptor-like"/>
    <property type="match status" value="1"/>
</dbReference>
<dbReference type="PROSITE" id="PS00950">
    <property type="entry name" value="BACTERIAL_OPSIN_1"/>
    <property type="match status" value="1"/>
</dbReference>
<protein>
    <recommendedName>
        <fullName>Bacteriorhodopsin-II-like protein</fullName>
    </recommendedName>
    <alternativeName>
        <fullName>Bacteriorhodopsin-II</fullName>
    </alternativeName>
    <alternativeName>
        <fullName>Middle rhodopsin</fullName>
        <shortName>HwMR</shortName>
    </alternativeName>
</protein>
<organism>
    <name type="scientific">Haloquadratum walsbyi (strain DSM 16790 / HBSQ001)</name>
    <dbReference type="NCBI Taxonomy" id="362976"/>
    <lineage>
        <taxon>Archaea</taxon>
        <taxon>Methanobacteriati</taxon>
        <taxon>Methanobacteriota</taxon>
        <taxon>Stenosarchaea group</taxon>
        <taxon>Halobacteria</taxon>
        <taxon>Halobacteriales</taxon>
        <taxon>Haloferacaceae</taxon>
        <taxon>Haloquadratum</taxon>
    </lineage>
</organism>
<gene>
    <name type="primary">bop2</name>
    <name type="synonym">bopII</name>
    <name type="ordered locus">HQ_1017A</name>
</gene>
<keyword id="KW-0002">3D-structure</keyword>
<keyword id="KW-1003">Cell membrane</keyword>
<keyword id="KW-0157">Chromophore</keyword>
<keyword id="KW-0472">Membrane</keyword>
<keyword id="KW-0600">Photoreceptor protein</keyword>
<keyword id="KW-0675">Receptor</keyword>
<keyword id="KW-1185">Reference proteome</keyword>
<keyword id="KW-0681">Retinal protein</keyword>
<keyword id="KW-0716">Sensory transduction</keyword>
<keyword id="KW-0812">Transmembrane</keyword>
<keyword id="KW-1133">Transmembrane helix</keyword>